<dbReference type="EC" id="1.14.99.60" evidence="1"/>
<dbReference type="EMBL" id="CP000267">
    <property type="protein sequence ID" value="ABD68481.1"/>
    <property type="molecule type" value="Genomic_DNA"/>
</dbReference>
<dbReference type="RefSeq" id="WP_011463054.1">
    <property type="nucleotide sequence ID" value="NC_007908.1"/>
</dbReference>
<dbReference type="SMR" id="Q220S2"/>
<dbReference type="STRING" id="338969.Rfer_0731"/>
<dbReference type="KEGG" id="rfr:Rfer_0731"/>
<dbReference type="eggNOG" id="COG2941">
    <property type="taxonomic scope" value="Bacteria"/>
</dbReference>
<dbReference type="HOGENOM" id="CLU_088601_0_0_4"/>
<dbReference type="OrthoDB" id="5192789at2"/>
<dbReference type="UniPathway" id="UPA00232"/>
<dbReference type="Proteomes" id="UP000008332">
    <property type="component" value="Chromosome"/>
</dbReference>
<dbReference type="GO" id="GO:0005886">
    <property type="term" value="C:plasma membrane"/>
    <property type="evidence" value="ECO:0007669"/>
    <property type="project" value="UniProtKB-SubCell"/>
</dbReference>
<dbReference type="GO" id="GO:0008682">
    <property type="term" value="F:3-demethoxyubiquinol 3-hydroxylase activity"/>
    <property type="evidence" value="ECO:0007669"/>
    <property type="project" value="UniProtKB-EC"/>
</dbReference>
<dbReference type="GO" id="GO:0046872">
    <property type="term" value="F:metal ion binding"/>
    <property type="evidence" value="ECO:0007669"/>
    <property type="project" value="UniProtKB-KW"/>
</dbReference>
<dbReference type="GO" id="GO:0006744">
    <property type="term" value="P:ubiquinone biosynthetic process"/>
    <property type="evidence" value="ECO:0007669"/>
    <property type="project" value="UniProtKB-UniRule"/>
</dbReference>
<dbReference type="CDD" id="cd01042">
    <property type="entry name" value="DMQH"/>
    <property type="match status" value="1"/>
</dbReference>
<dbReference type="Gene3D" id="1.20.1260.10">
    <property type="match status" value="1"/>
</dbReference>
<dbReference type="HAMAP" id="MF_01658">
    <property type="entry name" value="COQ7"/>
    <property type="match status" value="1"/>
</dbReference>
<dbReference type="InterPro" id="IPR047809">
    <property type="entry name" value="COQ7_proteobact"/>
</dbReference>
<dbReference type="InterPro" id="IPR012347">
    <property type="entry name" value="Ferritin-like"/>
</dbReference>
<dbReference type="InterPro" id="IPR009078">
    <property type="entry name" value="Ferritin-like_SF"/>
</dbReference>
<dbReference type="InterPro" id="IPR011566">
    <property type="entry name" value="Ubq_synth_Coq7"/>
</dbReference>
<dbReference type="NCBIfam" id="NF033656">
    <property type="entry name" value="DMQ_monoox_COQ7"/>
    <property type="match status" value="1"/>
</dbReference>
<dbReference type="PANTHER" id="PTHR11237:SF4">
    <property type="entry name" value="5-DEMETHOXYUBIQUINONE HYDROXYLASE, MITOCHONDRIAL"/>
    <property type="match status" value="1"/>
</dbReference>
<dbReference type="PANTHER" id="PTHR11237">
    <property type="entry name" value="COENZYME Q10 BIOSYNTHESIS PROTEIN 7"/>
    <property type="match status" value="1"/>
</dbReference>
<dbReference type="Pfam" id="PF03232">
    <property type="entry name" value="COQ7"/>
    <property type="match status" value="1"/>
</dbReference>
<dbReference type="SUPFAM" id="SSF47240">
    <property type="entry name" value="Ferritin-like"/>
    <property type="match status" value="1"/>
</dbReference>
<feature type="chain" id="PRO_0000338729" description="3-demethoxyubiquinol 3-hydroxylase">
    <location>
        <begin position="1"/>
        <end position="210"/>
    </location>
</feature>
<feature type="binding site" evidence="1">
    <location>
        <position position="59"/>
    </location>
    <ligand>
        <name>Fe cation</name>
        <dbReference type="ChEBI" id="CHEBI:24875"/>
        <label>1</label>
    </ligand>
</feature>
<feature type="binding site" evidence="1">
    <location>
        <position position="89"/>
    </location>
    <ligand>
        <name>Fe cation</name>
        <dbReference type="ChEBI" id="CHEBI:24875"/>
        <label>1</label>
    </ligand>
</feature>
<feature type="binding site" evidence="1">
    <location>
        <position position="89"/>
    </location>
    <ligand>
        <name>Fe cation</name>
        <dbReference type="ChEBI" id="CHEBI:24875"/>
        <label>2</label>
    </ligand>
</feature>
<feature type="binding site" evidence="1">
    <location>
        <position position="92"/>
    </location>
    <ligand>
        <name>Fe cation</name>
        <dbReference type="ChEBI" id="CHEBI:24875"/>
        <label>1</label>
    </ligand>
</feature>
<feature type="binding site" evidence="1">
    <location>
        <position position="141"/>
    </location>
    <ligand>
        <name>Fe cation</name>
        <dbReference type="ChEBI" id="CHEBI:24875"/>
        <label>2</label>
    </ligand>
</feature>
<feature type="binding site" evidence="1">
    <location>
        <position position="173"/>
    </location>
    <ligand>
        <name>Fe cation</name>
        <dbReference type="ChEBI" id="CHEBI:24875"/>
        <label>1</label>
    </ligand>
</feature>
<feature type="binding site" evidence="1">
    <location>
        <position position="173"/>
    </location>
    <ligand>
        <name>Fe cation</name>
        <dbReference type="ChEBI" id="CHEBI:24875"/>
        <label>2</label>
    </ligand>
</feature>
<feature type="binding site" evidence="1">
    <location>
        <position position="176"/>
    </location>
    <ligand>
        <name>Fe cation</name>
        <dbReference type="ChEBI" id="CHEBI:24875"/>
        <label>2</label>
    </ligand>
</feature>
<evidence type="ECO:0000255" key="1">
    <source>
        <dbReference type="HAMAP-Rule" id="MF_01658"/>
    </source>
</evidence>
<reference key="1">
    <citation type="submission" date="2006-02" db="EMBL/GenBank/DDBJ databases">
        <title>Complete sequence of chromosome of Rhodoferax ferrireducens DSM 15236.</title>
        <authorList>
            <person name="Copeland A."/>
            <person name="Lucas S."/>
            <person name="Lapidus A."/>
            <person name="Barry K."/>
            <person name="Detter J.C."/>
            <person name="Glavina del Rio T."/>
            <person name="Hammon N."/>
            <person name="Israni S."/>
            <person name="Pitluck S."/>
            <person name="Brettin T."/>
            <person name="Bruce D."/>
            <person name="Han C."/>
            <person name="Tapia R."/>
            <person name="Gilna P."/>
            <person name="Kiss H."/>
            <person name="Schmutz J."/>
            <person name="Larimer F."/>
            <person name="Land M."/>
            <person name="Kyrpides N."/>
            <person name="Ivanova N."/>
            <person name="Richardson P."/>
        </authorList>
    </citation>
    <scope>NUCLEOTIDE SEQUENCE [LARGE SCALE GENOMIC DNA]</scope>
    <source>
        <strain>ATCC BAA-621 / DSM 15236 / T118</strain>
    </source>
</reference>
<name>COQ7_ALBFT</name>
<sequence>MPNTLQDRFFTTCDAALRTLFVTPHAERACPTLPGEATALTDAEKVQSGALMRVNHVGEVCAQALYTAQAFATKNEALRAHFTKASADETNHLAWTQQRLDELGARPSLLNPLWYGAAFGLGLLAGRLGDPISLGFVVETENQVEAHLESHLSLLPANDHASRAIVAQMKDDEVRHALDAQKAGAVPLPPPVKSLMTAAAKVMTTVAHRI</sequence>
<organism>
    <name type="scientific">Albidiferax ferrireducens (strain ATCC BAA-621 / DSM 15236 / T118)</name>
    <name type="common">Rhodoferax ferrireducens</name>
    <dbReference type="NCBI Taxonomy" id="338969"/>
    <lineage>
        <taxon>Bacteria</taxon>
        <taxon>Pseudomonadati</taxon>
        <taxon>Pseudomonadota</taxon>
        <taxon>Betaproteobacteria</taxon>
        <taxon>Burkholderiales</taxon>
        <taxon>Comamonadaceae</taxon>
        <taxon>Rhodoferax</taxon>
    </lineage>
</organism>
<proteinExistence type="inferred from homology"/>
<comment type="function">
    <text evidence="1">Catalyzes the hydroxylation of 2-nonaprenyl-3-methyl-6-methoxy-1,4-benzoquinol during ubiquinone biosynthesis.</text>
</comment>
<comment type="catalytic activity">
    <reaction evidence="1">
        <text>a 5-methoxy-2-methyl-3-(all-trans-polyprenyl)benzene-1,4-diol + AH2 + O2 = a 3-demethylubiquinol + A + H2O</text>
        <dbReference type="Rhea" id="RHEA:50908"/>
        <dbReference type="Rhea" id="RHEA-COMP:10859"/>
        <dbReference type="Rhea" id="RHEA-COMP:10914"/>
        <dbReference type="ChEBI" id="CHEBI:13193"/>
        <dbReference type="ChEBI" id="CHEBI:15377"/>
        <dbReference type="ChEBI" id="CHEBI:15379"/>
        <dbReference type="ChEBI" id="CHEBI:17499"/>
        <dbReference type="ChEBI" id="CHEBI:84167"/>
        <dbReference type="ChEBI" id="CHEBI:84422"/>
        <dbReference type="EC" id="1.14.99.60"/>
    </reaction>
</comment>
<comment type="cofactor">
    <cofactor evidence="1">
        <name>Fe cation</name>
        <dbReference type="ChEBI" id="CHEBI:24875"/>
    </cofactor>
    <text evidence="1">Binds 2 iron ions per subunit.</text>
</comment>
<comment type="pathway">
    <text evidence="1">Cofactor biosynthesis; ubiquinone biosynthesis.</text>
</comment>
<comment type="subcellular location">
    <subcellularLocation>
        <location evidence="1">Cell membrane</location>
        <topology evidence="1">Peripheral membrane protein</topology>
    </subcellularLocation>
</comment>
<comment type="similarity">
    <text evidence="1">Belongs to the COQ7 family.</text>
</comment>
<keyword id="KW-1003">Cell membrane</keyword>
<keyword id="KW-0408">Iron</keyword>
<keyword id="KW-0472">Membrane</keyword>
<keyword id="KW-0479">Metal-binding</keyword>
<keyword id="KW-0503">Monooxygenase</keyword>
<keyword id="KW-0560">Oxidoreductase</keyword>
<keyword id="KW-1185">Reference proteome</keyword>
<keyword id="KW-0831">Ubiquinone biosynthesis</keyword>
<gene>
    <name evidence="1" type="primary">coq7</name>
    <name type="ordered locus">Rfer_0731</name>
</gene>
<protein>
    <recommendedName>
        <fullName evidence="1">3-demethoxyubiquinol 3-hydroxylase</fullName>
        <shortName evidence="1">DMQ hydroxylase</shortName>
        <ecNumber evidence="1">1.14.99.60</ecNumber>
    </recommendedName>
    <alternativeName>
        <fullName evidence="1">2-nonaprenyl-3-methyl-6-methoxy-1,4-benzoquinol hydroxylase</fullName>
    </alternativeName>
</protein>
<accession>Q220S2</accession>